<gene>
    <name evidence="2" type="primary">Sod1</name>
    <name evidence="2" type="synonym">Sod</name>
    <name type="ORF">GJ11304</name>
</gene>
<comment type="function">
    <text>Destroys radicals which are normally produced within the cells and which are toxic to biological systems.</text>
</comment>
<comment type="catalytic activity">
    <reaction>
        <text>2 superoxide + 2 H(+) = H2O2 + O2</text>
        <dbReference type="Rhea" id="RHEA:20696"/>
        <dbReference type="ChEBI" id="CHEBI:15378"/>
        <dbReference type="ChEBI" id="CHEBI:15379"/>
        <dbReference type="ChEBI" id="CHEBI:16240"/>
        <dbReference type="ChEBI" id="CHEBI:18421"/>
        <dbReference type="EC" id="1.15.1.1"/>
    </reaction>
</comment>
<comment type="cofactor">
    <cofactor>
        <name>Cu cation</name>
        <dbReference type="ChEBI" id="CHEBI:23378"/>
    </cofactor>
    <text>Binds 1 copper ion per subunit.</text>
</comment>
<comment type="cofactor">
    <cofactor>
        <name>Zn(2+)</name>
        <dbReference type="ChEBI" id="CHEBI:29105"/>
    </cofactor>
    <text>Binds 1 zinc ion per subunit.</text>
</comment>
<comment type="subunit">
    <text>Homodimer.</text>
</comment>
<comment type="subcellular location">
    <subcellularLocation>
        <location>Cytoplasm</location>
    </subcellularLocation>
</comment>
<comment type="similarity">
    <text evidence="3">Belongs to the Cu-Zn superoxide dismutase family.</text>
</comment>
<protein>
    <recommendedName>
        <fullName evidence="2">Superoxide dismutase [Cu-Zn]</fullName>
        <ecNumber>1.15.1.1</ecNumber>
    </recommendedName>
    <alternativeName>
        <fullName evidence="2">Superoxide dismutase 1</fullName>
    </alternativeName>
</protein>
<reference key="1">
    <citation type="journal article" date="1989" name="Nucleic Acids Res.">
        <title>Drosophila virilis Cu-Zn superoxide dismutase gene sequence.</title>
        <authorList>
            <person name="Kwiatowski J."/>
            <person name="Ayala F.J."/>
        </authorList>
    </citation>
    <scope>NUCLEOTIDE SEQUENCE [GENOMIC DNA]</scope>
</reference>
<reference key="2">
    <citation type="journal article" date="2007" name="Nature">
        <title>Evolution of genes and genomes on the Drosophila phylogeny.</title>
        <authorList>
            <consortium name="Drosophila 12 genomes consortium"/>
        </authorList>
    </citation>
    <scope>NUCLEOTIDE SEQUENCE [LARGE SCALE GENOMIC DNA]</scope>
    <source>
        <strain>Tucson 15010-1051.87</strain>
    </source>
</reference>
<accession>P10791</accession>
<accession>B4LC46</accession>
<proteinExistence type="inferred from homology"/>
<organism>
    <name type="scientific">Drosophila virilis</name>
    <name type="common">Fruit fly</name>
    <dbReference type="NCBI Taxonomy" id="7244"/>
    <lineage>
        <taxon>Eukaryota</taxon>
        <taxon>Metazoa</taxon>
        <taxon>Ecdysozoa</taxon>
        <taxon>Arthropoda</taxon>
        <taxon>Hexapoda</taxon>
        <taxon>Insecta</taxon>
        <taxon>Pterygota</taxon>
        <taxon>Neoptera</taxon>
        <taxon>Endopterygota</taxon>
        <taxon>Diptera</taxon>
        <taxon>Brachycera</taxon>
        <taxon>Muscomorpha</taxon>
        <taxon>Ephydroidea</taxon>
        <taxon>Drosophilidae</taxon>
        <taxon>Drosophila</taxon>
    </lineage>
</organism>
<name>SODC_DROVI</name>
<dbReference type="EC" id="1.15.1.1"/>
<dbReference type="EMBL" id="X13831">
    <property type="protein sequence ID" value="CAA32060.1"/>
    <property type="molecule type" value="Genomic_DNA"/>
</dbReference>
<dbReference type="EMBL" id="CH940647">
    <property type="protein sequence ID" value="EDW70874.1"/>
    <property type="molecule type" value="Genomic_DNA"/>
</dbReference>
<dbReference type="PIR" id="S03606">
    <property type="entry name" value="S03606"/>
</dbReference>
<dbReference type="RefSeq" id="XP_002048532.1">
    <property type="nucleotide sequence ID" value="XM_002048496.4"/>
</dbReference>
<dbReference type="SMR" id="P10791"/>
<dbReference type="FunCoup" id="P10791">
    <property type="interactions" value="1242"/>
</dbReference>
<dbReference type="STRING" id="7244.P10791"/>
<dbReference type="EnsemblMetazoa" id="FBtr0227229">
    <property type="protein sequence ID" value="FBpp0225721"/>
    <property type="gene ID" value="FBgn0013096"/>
</dbReference>
<dbReference type="EnsemblMetazoa" id="XM_002048496.3">
    <property type="protein sequence ID" value="XP_002048532.1"/>
    <property type="gene ID" value="LOC6624514"/>
</dbReference>
<dbReference type="GeneID" id="6624514"/>
<dbReference type="KEGG" id="dvi:6624514"/>
<dbReference type="CTD" id="6647"/>
<dbReference type="eggNOG" id="KOG0441">
    <property type="taxonomic scope" value="Eukaryota"/>
</dbReference>
<dbReference type="HOGENOM" id="CLU_056632_4_1_1"/>
<dbReference type="InParanoid" id="P10791"/>
<dbReference type="OMA" id="AQRGFHI"/>
<dbReference type="OrthoDB" id="2015551at2759"/>
<dbReference type="PhylomeDB" id="P10791"/>
<dbReference type="Proteomes" id="UP000008792">
    <property type="component" value="Unassembled WGS sequence"/>
</dbReference>
<dbReference type="GO" id="GO:0005777">
    <property type="term" value="C:peroxisome"/>
    <property type="evidence" value="ECO:0007669"/>
    <property type="project" value="EnsemblMetazoa"/>
</dbReference>
<dbReference type="GO" id="GO:0005507">
    <property type="term" value="F:copper ion binding"/>
    <property type="evidence" value="ECO:0007669"/>
    <property type="project" value="InterPro"/>
</dbReference>
<dbReference type="GO" id="GO:0042803">
    <property type="term" value="F:protein homodimerization activity"/>
    <property type="evidence" value="ECO:0007669"/>
    <property type="project" value="EnsemblMetazoa"/>
</dbReference>
<dbReference type="GO" id="GO:0004784">
    <property type="term" value="F:superoxide dismutase activity"/>
    <property type="evidence" value="ECO:0007669"/>
    <property type="project" value="UniProtKB-EC"/>
</dbReference>
<dbReference type="GO" id="GO:0008340">
    <property type="term" value="P:determination of adult lifespan"/>
    <property type="evidence" value="ECO:0007669"/>
    <property type="project" value="EnsemblMetazoa"/>
</dbReference>
<dbReference type="GO" id="GO:1901526">
    <property type="term" value="P:positive regulation of mitophagy"/>
    <property type="evidence" value="ECO:0007669"/>
    <property type="project" value="EnsemblMetazoa"/>
</dbReference>
<dbReference type="GO" id="GO:0048167">
    <property type="term" value="P:regulation of synaptic plasticity"/>
    <property type="evidence" value="ECO:0007669"/>
    <property type="project" value="EnsemblMetazoa"/>
</dbReference>
<dbReference type="CDD" id="cd00305">
    <property type="entry name" value="Cu-Zn_Superoxide_Dismutase"/>
    <property type="match status" value="1"/>
</dbReference>
<dbReference type="FunFam" id="2.60.40.200:FF:000001">
    <property type="entry name" value="Superoxide dismutase [Cu-Zn]"/>
    <property type="match status" value="1"/>
</dbReference>
<dbReference type="Gene3D" id="2.60.40.200">
    <property type="entry name" value="Superoxide dismutase, copper/zinc binding domain"/>
    <property type="match status" value="1"/>
</dbReference>
<dbReference type="InterPro" id="IPR036423">
    <property type="entry name" value="SOD-like_Cu/Zn_dom_sf"/>
</dbReference>
<dbReference type="InterPro" id="IPR024134">
    <property type="entry name" value="SOD_Cu/Zn_/chaperone"/>
</dbReference>
<dbReference type="InterPro" id="IPR018152">
    <property type="entry name" value="SOD_Cu/Zn_BS"/>
</dbReference>
<dbReference type="InterPro" id="IPR001424">
    <property type="entry name" value="SOD_Cu_Zn_dom"/>
</dbReference>
<dbReference type="PANTHER" id="PTHR10003">
    <property type="entry name" value="SUPEROXIDE DISMUTASE CU-ZN -RELATED"/>
    <property type="match status" value="1"/>
</dbReference>
<dbReference type="Pfam" id="PF00080">
    <property type="entry name" value="Sod_Cu"/>
    <property type="match status" value="1"/>
</dbReference>
<dbReference type="PRINTS" id="PR00068">
    <property type="entry name" value="CUZNDISMTASE"/>
</dbReference>
<dbReference type="SUPFAM" id="SSF49329">
    <property type="entry name" value="Cu,Zn superoxide dismutase-like"/>
    <property type="match status" value="1"/>
</dbReference>
<dbReference type="PROSITE" id="PS00087">
    <property type="entry name" value="SOD_CU_ZN_1"/>
    <property type="match status" value="1"/>
</dbReference>
<dbReference type="PROSITE" id="PS00332">
    <property type="entry name" value="SOD_CU_ZN_2"/>
    <property type="match status" value="1"/>
</dbReference>
<sequence>MVVKAVCVINGDAKGTVFFEQEGEGCPVKVTGEVTGLAKGQHGFHVHEFGDNTNGCMSSGPHFNPYQKEHGAPTDENRHLGDLGNIIANGDGPTPVNICDCKITLLGANSIIGRTVVVHADPDDLGKGGHELSKTTGNAGARIGCGVIGIAKI</sequence>
<feature type="initiator methionine" description="Removed" evidence="1">
    <location>
        <position position="1"/>
    </location>
</feature>
<feature type="chain" id="PRO_0000164098" description="Superoxide dismutase [Cu-Zn]">
    <location>
        <begin position="2"/>
        <end position="153"/>
    </location>
</feature>
<feature type="binding site">
    <location>
        <position position="45"/>
    </location>
    <ligand>
        <name>Cu cation</name>
        <dbReference type="ChEBI" id="CHEBI:23378"/>
        <note>catalytic</note>
    </ligand>
</feature>
<feature type="binding site">
    <location>
        <position position="47"/>
    </location>
    <ligand>
        <name>Cu cation</name>
        <dbReference type="ChEBI" id="CHEBI:23378"/>
        <note>catalytic</note>
    </ligand>
</feature>
<feature type="binding site">
    <location>
        <position position="62"/>
    </location>
    <ligand>
        <name>Cu cation</name>
        <dbReference type="ChEBI" id="CHEBI:23378"/>
        <note>catalytic</note>
    </ligand>
</feature>
<feature type="binding site">
    <location>
        <position position="62"/>
    </location>
    <ligand>
        <name>Zn(2+)</name>
        <dbReference type="ChEBI" id="CHEBI:29105"/>
        <note>structural</note>
    </ligand>
</feature>
<feature type="binding site">
    <location>
        <position position="70"/>
    </location>
    <ligand>
        <name>Zn(2+)</name>
        <dbReference type="ChEBI" id="CHEBI:29105"/>
        <note>structural</note>
    </ligand>
</feature>
<feature type="binding site">
    <location>
        <position position="79"/>
    </location>
    <ligand>
        <name>Zn(2+)</name>
        <dbReference type="ChEBI" id="CHEBI:29105"/>
        <note>structural</note>
    </ligand>
</feature>
<feature type="binding site">
    <location>
        <position position="82"/>
    </location>
    <ligand>
        <name>Zn(2+)</name>
        <dbReference type="ChEBI" id="CHEBI:29105"/>
        <note>structural</note>
    </ligand>
</feature>
<feature type="binding site">
    <location>
        <position position="119"/>
    </location>
    <ligand>
        <name>Cu cation</name>
        <dbReference type="ChEBI" id="CHEBI:23378"/>
        <note>catalytic</note>
    </ligand>
</feature>
<feature type="disulfide bond" evidence="1">
    <location>
        <begin position="56"/>
        <end position="145"/>
    </location>
</feature>
<keyword id="KW-0049">Antioxidant</keyword>
<keyword id="KW-0186">Copper</keyword>
<keyword id="KW-0963">Cytoplasm</keyword>
<keyword id="KW-1015">Disulfide bond</keyword>
<keyword id="KW-0479">Metal-binding</keyword>
<keyword id="KW-0560">Oxidoreductase</keyword>
<keyword id="KW-1185">Reference proteome</keyword>
<keyword id="KW-0862">Zinc</keyword>
<evidence type="ECO:0000250" key="1"/>
<evidence type="ECO:0000250" key="2">
    <source>
        <dbReference type="UniProtKB" id="P61851"/>
    </source>
</evidence>
<evidence type="ECO:0000305" key="3"/>